<sequence length="145" mass="16028">MNASNPCRRFPRSARVRTRAQYTIVFDTARRTSDPLLSLHWRTGDTPPRLGMAVSRKVDTRAVGRNRIKRVLRDAMRHLLPELAGGDYVIVARSAAAKATNPQIRDAFVRLLRRAGALPLPAAPGTMPPARTVRPSSPSPTEPEL</sequence>
<accession>Q3BLZ6</accession>
<name>RNPA_XANE5</name>
<evidence type="ECO:0000255" key="1">
    <source>
        <dbReference type="HAMAP-Rule" id="MF_00227"/>
    </source>
</evidence>
<evidence type="ECO:0000256" key="2">
    <source>
        <dbReference type="SAM" id="MobiDB-lite"/>
    </source>
</evidence>
<proteinExistence type="inferred from homology"/>
<comment type="function">
    <text evidence="1">RNaseP catalyzes the removal of the 5'-leader sequence from pre-tRNA to produce the mature 5'-terminus. It can also cleave other RNA substrates such as 4.5S RNA. The protein component plays an auxiliary but essential role in vivo by binding to the 5'-leader sequence and broadening the substrate specificity of the ribozyme.</text>
</comment>
<comment type="catalytic activity">
    <reaction evidence="1">
        <text>Endonucleolytic cleavage of RNA, removing 5'-extranucleotides from tRNA precursor.</text>
        <dbReference type="EC" id="3.1.26.5"/>
    </reaction>
</comment>
<comment type="subunit">
    <text evidence="1">Consists of a catalytic RNA component (M1 or rnpB) and a protein subunit.</text>
</comment>
<comment type="similarity">
    <text evidence="1">Belongs to the RnpA family.</text>
</comment>
<protein>
    <recommendedName>
        <fullName evidence="1">Ribonuclease P protein component</fullName>
        <shortName evidence="1">RNase P protein</shortName>
        <shortName evidence="1">RNaseP protein</shortName>
        <ecNumber evidence="1">3.1.26.5</ecNumber>
    </recommendedName>
    <alternativeName>
        <fullName evidence="1">Protein C5</fullName>
    </alternativeName>
</protein>
<organism>
    <name type="scientific">Xanthomonas euvesicatoria pv. vesicatoria (strain 85-10)</name>
    <name type="common">Xanthomonas campestris pv. vesicatoria</name>
    <dbReference type="NCBI Taxonomy" id="316273"/>
    <lineage>
        <taxon>Bacteria</taxon>
        <taxon>Pseudomonadati</taxon>
        <taxon>Pseudomonadota</taxon>
        <taxon>Gammaproteobacteria</taxon>
        <taxon>Lysobacterales</taxon>
        <taxon>Lysobacteraceae</taxon>
        <taxon>Xanthomonas</taxon>
    </lineage>
</organism>
<gene>
    <name evidence="1" type="primary">rnpA</name>
    <name type="ordered locus">XCV4486</name>
</gene>
<feature type="chain" id="PRO_1000021490" description="Ribonuclease P protein component">
    <location>
        <begin position="1"/>
        <end position="145"/>
    </location>
</feature>
<feature type="region of interest" description="Disordered" evidence="2">
    <location>
        <begin position="119"/>
        <end position="145"/>
    </location>
</feature>
<dbReference type="EC" id="3.1.26.5" evidence="1"/>
<dbReference type="EMBL" id="AM039952">
    <property type="protein sequence ID" value="CAJ26217.1"/>
    <property type="molecule type" value="Genomic_DNA"/>
</dbReference>
<dbReference type="RefSeq" id="WP_007968218.1">
    <property type="nucleotide sequence ID" value="NZ_CP017190.1"/>
</dbReference>
<dbReference type="SMR" id="Q3BLZ6"/>
<dbReference type="STRING" id="456327.BJD11_22960"/>
<dbReference type="GeneID" id="97512524"/>
<dbReference type="KEGG" id="xcv:XCV4486"/>
<dbReference type="eggNOG" id="COG0594">
    <property type="taxonomic scope" value="Bacteria"/>
</dbReference>
<dbReference type="HOGENOM" id="CLU_117179_3_0_6"/>
<dbReference type="Proteomes" id="UP000007069">
    <property type="component" value="Chromosome"/>
</dbReference>
<dbReference type="GO" id="GO:0030677">
    <property type="term" value="C:ribonuclease P complex"/>
    <property type="evidence" value="ECO:0007669"/>
    <property type="project" value="TreeGrafter"/>
</dbReference>
<dbReference type="GO" id="GO:0042781">
    <property type="term" value="F:3'-tRNA processing endoribonuclease activity"/>
    <property type="evidence" value="ECO:0007669"/>
    <property type="project" value="TreeGrafter"/>
</dbReference>
<dbReference type="GO" id="GO:0004526">
    <property type="term" value="F:ribonuclease P activity"/>
    <property type="evidence" value="ECO:0007669"/>
    <property type="project" value="UniProtKB-UniRule"/>
</dbReference>
<dbReference type="GO" id="GO:0000049">
    <property type="term" value="F:tRNA binding"/>
    <property type="evidence" value="ECO:0007669"/>
    <property type="project" value="UniProtKB-UniRule"/>
</dbReference>
<dbReference type="GO" id="GO:0001682">
    <property type="term" value="P:tRNA 5'-leader removal"/>
    <property type="evidence" value="ECO:0007669"/>
    <property type="project" value="UniProtKB-UniRule"/>
</dbReference>
<dbReference type="FunFam" id="3.30.230.10:FF:000082">
    <property type="entry name" value="Ribonuclease P protein component"/>
    <property type="match status" value="1"/>
</dbReference>
<dbReference type="Gene3D" id="3.30.230.10">
    <property type="match status" value="1"/>
</dbReference>
<dbReference type="HAMAP" id="MF_00227">
    <property type="entry name" value="RNase_P"/>
    <property type="match status" value="1"/>
</dbReference>
<dbReference type="InterPro" id="IPR020568">
    <property type="entry name" value="Ribosomal_Su5_D2-typ_SF"/>
</dbReference>
<dbReference type="InterPro" id="IPR014721">
    <property type="entry name" value="Ribsml_uS5_D2-typ_fold_subgr"/>
</dbReference>
<dbReference type="InterPro" id="IPR000100">
    <property type="entry name" value="RNase_P"/>
</dbReference>
<dbReference type="InterPro" id="IPR020539">
    <property type="entry name" value="RNase_P_CS"/>
</dbReference>
<dbReference type="NCBIfam" id="TIGR00188">
    <property type="entry name" value="rnpA"/>
    <property type="match status" value="1"/>
</dbReference>
<dbReference type="PANTHER" id="PTHR33992">
    <property type="entry name" value="RIBONUCLEASE P PROTEIN COMPONENT"/>
    <property type="match status" value="1"/>
</dbReference>
<dbReference type="PANTHER" id="PTHR33992:SF1">
    <property type="entry name" value="RIBONUCLEASE P PROTEIN COMPONENT"/>
    <property type="match status" value="1"/>
</dbReference>
<dbReference type="Pfam" id="PF00825">
    <property type="entry name" value="Ribonuclease_P"/>
    <property type="match status" value="1"/>
</dbReference>
<dbReference type="SUPFAM" id="SSF54211">
    <property type="entry name" value="Ribosomal protein S5 domain 2-like"/>
    <property type="match status" value="1"/>
</dbReference>
<dbReference type="PROSITE" id="PS00648">
    <property type="entry name" value="RIBONUCLEASE_P"/>
    <property type="match status" value="1"/>
</dbReference>
<keyword id="KW-0255">Endonuclease</keyword>
<keyword id="KW-0378">Hydrolase</keyword>
<keyword id="KW-0540">Nuclease</keyword>
<keyword id="KW-0694">RNA-binding</keyword>
<keyword id="KW-0819">tRNA processing</keyword>
<reference key="1">
    <citation type="journal article" date="2005" name="J. Bacteriol.">
        <title>Insights into genome plasticity and pathogenicity of the plant pathogenic Bacterium Xanthomonas campestris pv. vesicatoria revealed by the complete genome sequence.</title>
        <authorList>
            <person name="Thieme F."/>
            <person name="Koebnik R."/>
            <person name="Bekel T."/>
            <person name="Berger C."/>
            <person name="Boch J."/>
            <person name="Buettner D."/>
            <person name="Caldana C."/>
            <person name="Gaigalat L."/>
            <person name="Goesmann A."/>
            <person name="Kay S."/>
            <person name="Kirchner O."/>
            <person name="Lanz C."/>
            <person name="Linke B."/>
            <person name="McHardy A.C."/>
            <person name="Meyer F."/>
            <person name="Mittenhuber G."/>
            <person name="Nies D.H."/>
            <person name="Niesbach-Kloesgen U."/>
            <person name="Patschkowski T."/>
            <person name="Rueckert C."/>
            <person name="Rupp O."/>
            <person name="Schneiker S."/>
            <person name="Schuster S.C."/>
            <person name="Vorhoelter F.J."/>
            <person name="Weber E."/>
            <person name="Puehler A."/>
            <person name="Bonas U."/>
            <person name="Bartels D."/>
            <person name="Kaiser O."/>
        </authorList>
    </citation>
    <scope>NUCLEOTIDE SEQUENCE [LARGE SCALE GENOMIC DNA]</scope>
    <source>
        <strain>85-10</strain>
    </source>
</reference>